<sequence length="1577" mass="177578">MILLHFVYSLWALLLIPLINAEEFTPKVTKTIAQDSFEILSFDDSNTLIRKQDASVTISFDDGETWEKVEGIEDEITWIYIDPFNRHDRAVATSMYESRLYITNDQGKSWERITLPDSEKNISSRGCYIETHPLNKNYFLAKCNYCEKTEVDNEENSGDEEGAPVIFNITHCTDKVFASNDGGKSFSEIKSSLERNENSAISISDCGFAKTGKDSDLESSDTSIICLFQNMQLIMDEFSSPYTESKLVLTTDWGKSLKEFDQFKDKVVNGYRILKSHMVVITQGDRYNDMSSMDVWVSNDLSNFKMAYMPTQLRHSMQGEIYEDAMGRIILPMSRERSDQEEDKGIVSEILISDSQGLKFSPIPWTANEVFGYINLYQPTYLKGTMIASLYPLSRRRNRKGKAKGVKNKGVTKISVDNGLTWTVLKVVDPDNADSFDCDITDFENCSLQNMFYTREGSTPTAGILMTTGIVGDGSVFDWGDQRTFISRDGGLTWKLAFDFPCLYAVGDYGNVIVAIPYNADEDDDPQSEFYYSLDQGKTWTEYQLETTIYPNEVMNTTPDGSGAKFILNGFTLAHMDGTTNFIYAIDFSTAFNDKTCEENDFEDWNLAEGKCVNGVKYKIRRRKQDAQCLVKKVFEDLQLFETACDKCTEADYECAFEFVRDATGKCVPDYNLIVLSDVCDKTKKKTVPVKPLQLVKGDKCKKPMTVKSVDISCEGVPKKGTNDKEIVVTENKFDFKIQFYQYFDTVTDESLLMINSRGEAYISHDGGQTIRRVDSNGETIIEVVFNPYYNSSAYLFGSKGSIFSTHDRGYSFMTAKLPEARQLGMPLDFNAKAQDTFIYYGGKNCESILSPECHAVAYLTNDGGETFTEMLDNAIHCEFAGSLFKYPSNEDMVMCQVKEKSSQTRSLVSSTDFFQDDKNTVFENIIGYLSTGGYIIVAVPHENNELRAYVTIDGTEFAEAKFPYDEDVGKQEAFTILESEKGSIFLHLATNLVPGRDFGNLLKSNSNGTSFVTLEHAVNRNTFGYVDFEKIQGLEGIILTNIVSNSDKVAENKEDKQLKTKITFNEGSDWNFLKPPKRDSEGKKFSCSSKSLDECSLHLHGYTERKDIRDTYSSGSALGMMFGVGNVGPNLLPYKECSTFFTTDGGETWAEVKKTPHQWEYGDHGGILVLVPENSETDSISYSTDFGKTWKDYKFCADKVLVKDITTVPRDSALRFLLFGEAADIGGSSFRTYTIDFRNIFERQCDFDITGKESADYKYSPLSSKSNCLFGHQTEFLRKTDENCFIGNIPLSEFSRNIKNCSCTRQDFECDYNFYKANDGTCKLVKGLSPANAADVCKKEPDLIEYFESSGYRKIPLSTCEGGLKLDAPSSPHACPGKEKEFKEKYSVSAGPFAFIFISILLIIFFAAWFVYDRGIRRNGGFARFGEIRLGDDGLIENNNTDRVVNNIVKSGFYVFSNIGSLLQHTKTNIAHVISKIRERFGNRTGPSYSSLIHDQFLDEADDLLAGHDEDANDLSSFMDQGSNFEIEEDDVPTLEEEHTSYTDQPTTTDVPDALPEGNEENIDRPDSTAPSNENQ</sequence>
<evidence type="ECO:0000250" key="1"/>
<evidence type="ECO:0000255" key="2"/>
<evidence type="ECO:0000256" key="3">
    <source>
        <dbReference type="SAM" id="MobiDB-lite"/>
    </source>
</evidence>
<evidence type="ECO:0000305" key="4"/>
<dbReference type="EMBL" id="FN393060">
    <property type="protein sequence ID" value="CAY77768.1"/>
    <property type="molecule type" value="Genomic_DNA"/>
</dbReference>
<dbReference type="SMR" id="C8Z3X9"/>
<dbReference type="GlyCosmos" id="C8Z3X9">
    <property type="glycosylation" value="6 sites, No reported glycans"/>
</dbReference>
<dbReference type="HOGENOM" id="CLU_000700_0_1_1"/>
<dbReference type="OrthoDB" id="9248at4893"/>
<dbReference type="Proteomes" id="UP000000286">
    <property type="component" value="Chromosome II, Scaffold EC1118_1B15"/>
</dbReference>
<dbReference type="GO" id="GO:0005829">
    <property type="term" value="C:cytosol"/>
    <property type="evidence" value="ECO:0007669"/>
    <property type="project" value="GOC"/>
</dbReference>
<dbReference type="GO" id="GO:0005794">
    <property type="term" value="C:Golgi apparatus"/>
    <property type="evidence" value="ECO:0007669"/>
    <property type="project" value="UniProtKB-SubCell"/>
</dbReference>
<dbReference type="GO" id="GO:0016020">
    <property type="term" value="C:membrane"/>
    <property type="evidence" value="ECO:0007669"/>
    <property type="project" value="UniProtKB-KW"/>
</dbReference>
<dbReference type="GO" id="GO:0006895">
    <property type="term" value="P:Golgi to endosome transport"/>
    <property type="evidence" value="ECO:0007669"/>
    <property type="project" value="TreeGrafter"/>
</dbReference>
<dbReference type="GO" id="GO:0006896">
    <property type="term" value="P:Golgi to vacuole transport"/>
    <property type="evidence" value="ECO:0007669"/>
    <property type="project" value="TreeGrafter"/>
</dbReference>
<dbReference type="GO" id="GO:0006623">
    <property type="term" value="P:protein targeting to vacuole"/>
    <property type="evidence" value="ECO:0007669"/>
    <property type="project" value="TreeGrafter"/>
</dbReference>
<dbReference type="CDD" id="cd15482">
    <property type="entry name" value="Sialidase_non-viral"/>
    <property type="match status" value="2"/>
</dbReference>
<dbReference type="FunFam" id="3.30.60.270:FF:000005">
    <property type="entry name" value="Sortilin"/>
    <property type="match status" value="1"/>
</dbReference>
<dbReference type="FunFam" id="2.130.10.10:FF:001564">
    <property type="entry name" value="Vacuolar protein sorting/targeting protein PEP1"/>
    <property type="match status" value="1"/>
</dbReference>
<dbReference type="FunFam" id="3.30.60.270:FF:000008">
    <property type="entry name" value="Vacuolar protein sorting/targeting protein PEP1"/>
    <property type="match status" value="1"/>
</dbReference>
<dbReference type="FunFam" id="2.130.10.10:FF:000998">
    <property type="entry name" value="VPS10 homolog 2"/>
    <property type="match status" value="1"/>
</dbReference>
<dbReference type="Gene3D" id="2.10.70.80">
    <property type="match status" value="1"/>
</dbReference>
<dbReference type="Gene3D" id="2.120.10.10">
    <property type="match status" value="1"/>
</dbReference>
<dbReference type="Gene3D" id="3.30.60.270">
    <property type="match status" value="2"/>
</dbReference>
<dbReference type="Gene3D" id="2.130.10.10">
    <property type="entry name" value="YVTN repeat-like/Quinoprotein amine dehydrogenase"/>
    <property type="match status" value="3"/>
</dbReference>
<dbReference type="InterPro" id="IPR036278">
    <property type="entry name" value="Sialidase_sf"/>
</dbReference>
<dbReference type="InterPro" id="IPR031777">
    <property type="entry name" value="Sortilin_C"/>
</dbReference>
<dbReference type="InterPro" id="IPR031778">
    <property type="entry name" value="Sortilin_N"/>
</dbReference>
<dbReference type="InterPro" id="IPR006581">
    <property type="entry name" value="VPS10"/>
</dbReference>
<dbReference type="InterPro" id="IPR050310">
    <property type="entry name" value="VPS10-sortilin"/>
</dbReference>
<dbReference type="InterPro" id="IPR015943">
    <property type="entry name" value="WD40/YVTN_repeat-like_dom_sf"/>
</dbReference>
<dbReference type="PANTHER" id="PTHR12106">
    <property type="entry name" value="SORTILIN RELATED"/>
    <property type="match status" value="1"/>
</dbReference>
<dbReference type="PANTHER" id="PTHR12106:SF27">
    <property type="entry name" value="SORTILIN-RELATED RECEPTOR"/>
    <property type="match status" value="1"/>
</dbReference>
<dbReference type="Pfam" id="PF15902">
    <property type="entry name" value="Sortilin-Vps10"/>
    <property type="match status" value="2"/>
</dbReference>
<dbReference type="Pfam" id="PF15901">
    <property type="entry name" value="Sortilin_C"/>
    <property type="match status" value="2"/>
</dbReference>
<dbReference type="SMART" id="SM00602">
    <property type="entry name" value="VPS10"/>
    <property type="match status" value="2"/>
</dbReference>
<dbReference type="SUPFAM" id="SSF110296">
    <property type="entry name" value="Oligoxyloglucan reducing end-specific cellobiohydrolase"/>
    <property type="match status" value="2"/>
</dbReference>
<dbReference type="SUPFAM" id="SSF50939">
    <property type="entry name" value="Sialidases"/>
    <property type="match status" value="1"/>
</dbReference>
<proteinExistence type="inferred from homology"/>
<keyword id="KW-0325">Glycoprotein</keyword>
<keyword id="KW-0333">Golgi apparatus</keyword>
<keyword id="KW-0472">Membrane</keyword>
<keyword id="KW-0653">Protein transport</keyword>
<keyword id="KW-0675">Receptor</keyword>
<keyword id="KW-0677">Repeat</keyword>
<keyword id="KW-0732">Signal</keyword>
<keyword id="KW-0812">Transmembrane</keyword>
<keyword id="KW-1133">Transmembrane helix</keyword>
<keyword id="KW-0813">Transport</keyword>
<accession>C8Z3X9</accession>
<comment type="function">
    <text evidence="1">Functions as a sorting receptor in the Golgi compartment required for the intracellular sorting and delivery of soluble vacuolar proteins, like carboxypeptidase Y (CPY) and proteinase A. Executes multiple rounds of sorting by cycling between the late Golgi and a prevacuolar endosome-like compartment. Binds the Golgi-modified P2 form of CPY, and this interaction is dependent on the presence of an intact CPY vacuolar protein sorting signal (By similarity).</text>
</comment>
<comment type="subcellular location">
    <subcellularLocation>
        <location evidence="1">Golgi apparatus</location>
        <location evidence="1">trans-Golgi network membrane</location>
        <topology evidence="1">Single-pass type I membrane protein</topology>
    </subcellularLocation>
    <subcellularLocation>
        <location evidence="1">Prevacuolar compartment membrane</location>
        <topology evidence="1">Single-pass type I membrane protein</topology>
    </subcellularLocation>
    <text evidence="1">Cycles between the Golgi apparatus and the prevacuolar compartment.</text>
</comment>
<comment type="similarity">
    <text evidence="4">Belongs to the VPS10-related sortilin family.</text>
</comment>
<organism>
    <name type="scientific">Saccharomyces cerevisiae (strain Lalvin EC1118 / Prise de mousse)</name>
    <name type="common">Baker's yeast</name>
    <dbReference type="NCBI Taxonomy" id="643680"/>
    <lineage>
        <taxon>Eukaryota</taxon>
        <taxon>Fungi</taxon>
        <taxon>Dikarya</taxon>
        <taxon>Ascomycota</taxon>
        <taxon>Saccharomycotina</taxon>
        <taxon>Saccharomycetes</taxon>
        <taxon>Saccharomycetales</taxon>
        <taxon>Saccharomycetaceae</taxon>
        <taxon>Saccharomyces</taxon>
    </lineage>
</organism>
<gene>
    <name type="primary">PEP1</name>
    <name type="synonym">VPS10</name>
    <name type="synonym">VPT1</name>
    <name type="ORF">EC1118_1B15_1090g</name>
</gene>
<name>VPS10_YEAS8</name>
<protein>
    <recommendedName>
        <fullName>Vacuolar protein sorting/targeting protein PEP1</fullName>
    </recommendedName>
    <alternativeName>
        <fullName>Carboxypeptidase Y receptor</fullName>
        <shortName>CPY receptor</shortName>
    </alternativeName>
    <alternativeName>
        <fullName>Carboxypeptidase Y-deficient protein 1</fullName>
    </alternativeName>
    <alternativeName>
        <fullName>Sortilin VPS10</fullName>
    </alternativeName>
    <alternativeName>
        <fullName>Vacuolar carboxypeptidase sorting receptor VPS10</fullName>
    </alternativeName>
    <alternativeName>
        <fullName>Vacuolar protein sorting-associated protein 10</fullName>
    </alternativeName>
    <alternativeName>
        <fullName>Vacuolar protein-targeting protein 1</fullName>
    </alternativeName>
</protein>
<feature type="signal peptide" evidence="2">
    <location>
        <begin position="1"/>
        <end position="21"/>
    </location>
</feature>
<feature type="chain" id="PRO_0000407547" description="Vacuolar protein sorting/targeting protein PEP1">
    <location>
        <begin position="22"/>
        <end position="1577"/>
    </location>
</feature>
<feature type="topological domain" description="Lumenal" evidence="2">
    <location>
        <begin position="22"/>
        <end position="1391"/>
    </location>
</feature>
<feature type="transmembrane region" description="Helical" evidence="2">
    <location>
        <begin position="1392"/>
        <end position="1412"/>
    </location>
</feature>
<feature type="topological domain" description="Cytoplasmic" evidence="2">
    <location>
        <begin position="1413"/>
        <end position="1577"/>
    </location>
</feature>
<feature type="repeat" description="BNR 1">
    <location>
        <begin position="58"/>
        <end position="68"/>
    </location>
</feature>
<feature type="repeat" description="BNR 2">
    <location>
        <begin position="101"/>
        <end position="111"/>
    </location>
</feature>
<feature type="repeat" description="BNR 3">
    <location>
        <begin position="179"/>
        <end position="187"/>
    </location>
</feature>
<feature type="repeat" description="BNR 4">
    <location>
        <begin position="414"/>
        <end position="423"/>
    </location>
</feature>
<feature type="repeat" description="BNR 5">
    <location>
        <begin position="485"/>
        <end position="495"/>
    </location>
</feature>
<feature type="repeat" description="BNR 6">
    <location>
        <begin position="531"/>
        <end position="541"/>
    </location>
</feature>
<feature type="repeat" description="BNR 7">
    <location>
        <begin position="762"/>
        <end position="771"/>
    </location>
</feature>
<feature type="repeat" description="BNR 8">
    <location>
        <begin position="859"/>
        <end position="869"/>
    </location>
</feature>
<feature type="repeat" description="BNR 9">
    <location>
        <begin position="1141"/>
        <end position="1150"/>
    </location>
</feature>
<feature type="repeat" description="BNR 10">
    <location>
        <begin position="1183"/>
        <end position="1192"/>
    </location>
</feature>
<feature type="region of interest" description="Disordered" evidence="3">
    <location>
        <begin position="1531"/>
        <end position="1577"/>
    </location>
</feature>
<feature type="glycosylation site" description="N-linked (GlcNAc...) asparagine" evidence="2">
    <location>
        <position position="121"/>
    </location>
</feature>
<feature type="glycosylation site" description="N-linked (GlcNAc...) asparagine" evidence="2">
    <location>
        <position position="168"/>
    </location>
</feature>
<feature type="glycosylation site" description="N-linked (GlcNAc...) asparagine" evidence="2">
    <location>
        <position position="445"/>
    </location>
</feature>
<feature type="glycosylation site" description="N-linked (GlcNAc...) asparagine" evidence="2">
    <location>
        <position position="791"/>
    </location>
</feature>
<feature type="glycosylation site" description="N-linked (GlcNAc...) asparagine" evidence="2">
    <location>
        <position position="1008"/>
    </location>
</feature>
<feature type="glycosylation site" description="N-linked (GlcNAc...) asparagine" evidence="2">
    <location>
        <position position="1301"/>
    </location>
</feature>
<reference key="1">
    <citation type="journal article" date="2009" name="Proc. Natl. Acad. Sci. U.S.A.">
        <title>Eukaryote-to-eukaryote gene transfer events revealed by the genome sequence of the wine yeast Saccharomyces cerevisiae EC1118.</title>
        <authorList>
            <person name="Novo M."/>
            <person name="Bigey F."/>
            <person name="Beyne E."/>
            <person name="Galeote V."/>
            <person name="Gavory F."/>
            <person name="Mallet S."/>
            <person name="Cambon B."/>
            <person name="Legras J.-L."/>
            <person name="Wincker P."/>
            <person name="Casaregola S."/>
            <person name="Dequin S."/>
        </authorList>
    </citation>
    <scope>NUCLEOTIDE SEQUENCE [LARGE SCALE GENOMIC DNA]</scope>
    <source>
        <strain>Lalvin EC1118 / Prise de mousse</strain>
    </source>
</reference>